<keyword id="KW-0903">Direct protein sequencing</keyword>
<keyword id="KW-1015">Disulfide bond</keyword>
<keyword id="KW-0339">Growth factor</keyword>
<keyword id="KW-0873">Pyrrolidone carboxylic acid</keyword>
<keyword id="KW-0964">Secreted</keyword>
<keyword id="KW-0800">Toxin</keyword>
<proteinExistence type="evidence at protein level"/>
<accession>P0CJ33</accession>
<dbReference type="GO" id="GO:0005615">
    <property type="term" value="C:extracellular space"/>
    <property type="evidence" value="ECO:0000314"/>
    <property type="project" value="UniProtKB"/>
</dbReference>
<dbReference type="GO" id="GO:0008083">
    <property type="term" value="F:growth factor activity"/>
    <property type="evidence" value="ECO:0007669"/>
    <property type="project" value="UniProtKB-KW"/>
</dbReference>
<dbReference type="GO" id="GO:0090729">
    <property type="term" value="F:toxin activity"/>
    <property type="evidence" value="ECO:0007669"/>
    <property type="project" value="UniProtKB-KW"/>
</dbReference>
<dbReference type="GO" id="GO:0005172">
    <property type="term" value="F:vascular endothelial growth factor receptor binding"/>
    <property type="evidence" value="ECO:0000314"/>
    <property type="project" value="UniProtKB"/>
</dbReference>
<evidence type="ECO:0000250" key="1">
    <source>
        <dbReference type="UniProtKB" id="P0DL42"/>
    </source>
</evidence>
<evidence type="ECO:0000250" key="2">
    <source>
        <dbReference type="UniProtKB" id="P82475"/>
    </source>
</evidence>
<evidence type="ECO:0000269" key="3">
    <source>
    </source>
</evidence>
<evidence type="ECO:0000303" key="4">
    <source>
    </source>
</evidence>
<evidence type="ECO:0000305" key="5"/>
<evidence type="ECO:0000305" key="6">
    <source>
    </source>
</evidence>
<organism>
    <name type="scientific">Macrovipera lebetinus</name>
    <name type="common">Levantine viper</name>
    <name type="synonym">Vipera lebetina</name>
    <dbReference type="NCBI Taxonomy" id="3148341"/>
    <lineage>
        <taxon>Eukaryota</taxon>
        <taxon>Metazoa</taxon>
        <taxon>Chordata</taxon>
        <taxon>Craniata</taxon>
        <taxon>Vertebrata</taxon>
        <taxon>Euteleostomi</taxon>
        <taxon>Lepidosauria</taxon>
        <taxon>Squamata</taxon>
        <taxon>Bifurcata</taxon>
        <taxon>Unidentata</taxon>
        <taxon>Episquamata</taxon>
        <taxon>Toxicofera</taxon>
        <taxon>Serpentes</taxon>
        <taxon>Colubroidea</taxon>
        <taxon>Viperidae</taxon>
        <taxon>Viperinae</taxon>
        <taxon>Macrovipera</taxon>
    </lineage>
</organism>
<name>TXVE1_MACLB</name>
<feature type="chain" id="PRO_0000406346" description="Snake venom vascular endothelial growth factor toxin IC1">
    <location>
        <begin position="1"/>
        <end position="13" status="greater than"/>
    </location>
</feature>
<feature type="modified residue" description="Pyrrolidone carboxylic acid (Glu)" evidence="1">
    <location>
        <position position="1"/>
    </location>
</feature>
<feature type="non-terminal residue">
    <location>
        <position position="13"/>
    </location>
</feature>
<comment type="function">
    <text evidence="3">Snake venom VEGFs may contribute to venom dispersion and prey subjugation by inducing vascular permeability and hypotension. This protein induces vascular permeability through VEGF receptor (KDR/VEGFR-2) signaling. May also induce angiogenesis through VEGF receptor (KDR/VEGFR-2) signaling.</text>
</comment>
<comment type="subunit">
    <text evidence="2 3">Homodimer; disulfide-linked (By similarity). Interacts with high affinity with KDR/VEGFR-2, and with a lower affinity with neuropilin-1 (NRP1) and neuropilin-2 (NRP2) (PubMed:19695228).</text>
</comment>
<comment type="subcellular location">
    <subcellularLocation>
        <location evidence="3">Secreted</location>
    </subcellularLocation>
</comment>
<comment type="tissue specificity">
    <text evidence="6">Expressed by the venom gland.</text>
</comment>
<comment type="similarity">
    <text evidence="5">Belongs to the PDGF/VEGF growth factor family. Snake venom VEGF subfamily.</text>
</comment>
<protein>
    <recommendedName>
        <fullName evidence="4">Snake venom vascular endothelial growth factor toxin IC1</fullName>
        <shortName>svVEGF</shortName>
    </recommendedName>
    <alternativeName>
        <fullName evidence="4">Increasing capillary-1</fullName>
    </alternativeName>
    <alternativeName>
        <fullName evidence="1">VEGF-F</fullName>
    </alternativeName>
</protein>
<sequence>EVRPFPEVYERIA</sequence>
<reference key="1">
    <citation type="journal article" date="2009" name="Biochem. Biophys. Res. Commun.">
        <title>Novel svVEGF isoforms from Macrovipera lebetina venom interact with neuropilins.</title>
        <authorList>
            <person name="Aloui Z."/>
            <person name="Hoos S."/>
            <person name="Geretti E."/>
            <person name="Kharmachi H."/>
            <person name="Haumont P.Y."/>
            <person name="Mejdoub H."/>
            <person name="Klagsbrun M."/>
            <person name="England P."/>
            <person name="Gasmi A."/>
        </authorList>
    </citation>
    <scope>PROTEIN SEQUENCE</scope>
    <scope>FUNCTION</scope>
    <scope>INTERACTION WITH KDR; NRP1 AND NRP2</scope>
    <scope>IDENTIFICATION BY MASS SPECTROMETRY</scope>
    <scope>SUBCELLULAR LOCATION</scope>
    <source>
        <tissue>Venom</tissue>
    </source>
</reference>